<protein>
    <recommendedName>
        <fullName>Glycolate oxidase 1</fullName>
        <shortName>AtGLO1</shortName>
        <shortName evidence="8">GOX1</shortName>
        <ecNumber evidence="6">1.1.3.15</ecNumber>
    </recommendedName>
    <alternativeName>
        <fullName>(S)-2-hydroxy-acid oxidase GLO1</fullName>
    </alternativeName>
    <alternativeName>
        <fullName>Short chain alpha-hydroxy acid oxidase GLO1</fullName>
    </alternativeName>
</protein>
<sequence length="367" mass="40341">MEITNVTEYDAIAKQKLPKMVYDYYASGAEDQWTLQENRNAFARILFRPRILIDVSKIDMTTTVLGFKISMPIMVAPTAMQKMAHPDGEYATARAASAAGTIMTLSSWATSSVEEVASTGPGIRFFQLYVYKNRNVVEQLVRRAERAGFKAIALTVDTPRLGRRESDIKNRFTLPPNLTLKNFEGLDLGKMDEANDSGLASYVAGQIDRTLSWKDVQWLQTITKLPILVKGVLTGEDARIAIQAGAAGIIVSNHGARQLDYVPATISALEEVVKATQGRIPVFLDGGVRRGTDVFKALALGASGIFIGRPVVFSLAAEGEAGVRKVLQMLRDEFELTMALSGCRSLKEISRNHITTEWDTPRPSARL</sequence>
<accession>Q9LRR9</accession>
<accession>B9DHI6</accession>
<accession>Q8VZA4</accession>
<accession>Q944K6</accession>
<gene>
    <name type="primary">GLO1</name>
    <name type="ordered locus">At3g14420</name>
    <name type="ORF">MAO2.2</name>
</gene>
<proteinExistence type="evidence at protein level"/>
<comment type="function">
    <text evidence="6 10">Catalyzes the oxidation of glycolate to glyoxylate, with a reduction of O2 to H2O2 (PubMed:25416784). Is a key enzyme in photorespiration in green plants (Probable).</text>
</comment>
<comment type="catalytic activity">
    <reaction evidence="6">
        <text>glycolate + O2 = glyoxylate + H2O2</text>
        <dbReference type="Rhea" id="RHEA:25311"/>
        <dbReference type="ChEBI" id="CHEBI:15379"/>
        <dbReference type="ChEBI" id="CHEBI:16240"/>
        <dbReference type="ChEBI" id="CHEBI:29805"/>
        <dbReference type="ChEBI" id="CHEBI:36655"/>
        <dbReference type="EC" id="1.1.3.15"/>
    </reaction>
    <physiologicalReaction direction="left-to-right" evidence="10">
        <dbReference type="Rhea" id="RHEA:25312"/>
    </physiologicalReaction>
</comment>
<comment type="cofactor">
    <cofactor evidence="3">
        <name>FMN</name>
        <dbReference type="ChEBI" id="CHEBI:58210"/>
    </cofactor>
</comment>
<comment type="biophysicochemical properties">
    <kinetics>
        <KM evidence="6">0.22 mM for glycolate (at pH 8 and 30 degrees Celsius)</KM>
        <text evidence="6">kcat is 29.86 sec(-1) (at pH 8 and 30 degrees Celsius).</text>
    </kinetics>
</comment>
<comment type="pathway">
    <text evidence="10">Photosynthesis; photorespiration; glycine from 2-phosphoglycolate: step 2/3.</text>
</comment>
<comment type="subunit">
    <text evidence="3">Homotetramer.</text>
</comment>
<comment type="subcellular location">
    <subcellularLocation>
        <location evidence="1">Peroxisome</location>
    </subcellularLocation>
</comment>
<comment type="alternative products">
    <event type="alternative splicing"/>
    <isoform>
        <id>Q9LRR9-1</id>
        <name>1</name>
        <sequence type="displayed"/>
    </isoform>
    <isoform>
        <id>Q9LRR9-2</id>
        <name>2</name>
        <sequence type="described" ref="VSP_040387"/>
    </isoform>
    <text>A number of isoforms are produced. According to EST sequences.</text>
</comment>
<comment type="similarity">
    <text evidence="5">Belongs to the FMN-dependent alpha-hydroxy acid dehydrogenase family.</text>
</comment>
<comment type="sequence caution" evidence="9">
    <conflict type="erroneous initiation">
        <sequence resource="EMBL-CDS" id="AAL38298"/>
    </conflict>
    <text>Truncated N-terminus.</text>
</comment>
<name>GLO1_ARATH</name>
<organism>
    <name type="scientific">Arabidopsis thaliana</name>
    <name type="common">Mouse-ear cress</name>
    <dbReference type="NCBI Taxonomy" id="3702"/>
    <lineage>
        <taxon>Eukaryota</taxon>
        <taxon>Viridiplantae</taxon>
        <taxon>Streptophyta</taxon>
        <taxon>Embryophyta</taxon>
        <taxon>Tracheophyta</taxon>
        <taxon>Spermatophyta</taxon>
        <taxon>Magnoliopsida</taxon>
        <taxon>eudicotyledons</taxon>
        <taxon>Gunneridae</taxon>
        <taxon>Pentapetalae</taxon>
        <taxon>rosids</taxon>
        <taxon>malvids</taxon>
        <taxon>Brassicales</taxon>
        <taxon>Brassicaceae</taxon>
        <taxon>Camelineae</taxon>
        <taxon>Arabidopsis</taxon>
    </lineage>
</organism>
<reference key="1">
    <citation type="journal article" date="2000" name="DNA Res.">
        <title>Structural analysis of Arabidopsis thaliana chromosome 3. I. Sequence features of the regions of 4,504,864 bp covered by sixty P1 and TAC clones.</title>
        <authorList>
            <person name="Sato S."/>
            <person name="Nakamura Y."/>
            <person name="Kaneko T."/>
            <person name="Katoh T."/>
            <person name="Asamizu E."/>
            <person name="Tabata S."/>
        </authorList>
    </citation>
    <scope>NUCLEOTIDE SEQUENCE [LARGE SCALE GENOMIC DNA]</scope>
    <source>
        <strain>cv. Columbia</strain>
    </source>
</reference>
<reference key="2">
    <citation type="journal article" date="2017" name="Plant J.">
        <title>Araport11: a complete reannotation of the Arabidopsis thaliana reference genome.</title>
        <authorList>
            <person name="Cheng C.Y."/>
            <person name="Krishnakumar V."/>
            <person name="Chan A.P."/>
            <person name="Thibaud-Nissen F."/>
            <person name="Schobel S."/>
            <person name="Town C.D."/>
        </authorList>
    </citation>
    <scope>GENOME REANNOTATION</scope>
    <source>
        <strain>cv. Columbia</strain>
    </source>
</reference>
<reference key="3">
    <citation type="journal article" date="2003" name="Science">
        <title>Empirical analysis of transcriptional activity in the Arabidopsis genome.</title>
        <authorList>
            <person name="Yamada K."/>
            <person name="Lim J."/>
            <person name="Dale J.M."/>
            <person name="Chen H."/>
            <person name="Shinn P."/>
            <person name="Palm C.J."/>
            <person name="Southwick A.M."/>
            <person name="Wu H.C."/>
            <person name="Kim C.J."/>
            <person name="Nguyen M."/>
            <person name="Pham P.K."/>
            <person name="Cheuk R.F."/>
            <person name="Karlin-Newmann G."/>
            <person name="Liu S.X."/>
            <person name="Lam B."/>
            <person name="Sakano H."/>
            <person name="Wu T."/>
            <person name="Yu G."/>
            <person name="Miranda M."/>
            <person name="Quach H.L."/>
            <person name="Tripp M."/>
            <person name="Chang C.H."/>
            <person name="Lee J.M."/>
            <person name="Toriumi M.J."/>
            <person name="Chan M.M."/>
            <person name="Tang C.C."/>
            <person name="Onodera C.S."/>
            <person name="Deng J.M."/>
            <person name="Akiyama K."/>
            <person name="Ansari Y."/>
            <person name="Arakawa T."/>
            <person name="Banh J."/>
            <person name="Banno F."/>
            <person name="Bowser L."/>
            <person name="Brooks S.Y."/>
            <person name="Carninci P."/>
            <person name="Chao Q."/>
            <person name="Choy N."/>
            <person name="Enju A."/>
            <person name="Goldsmith A.D."/>
            <person name="Gurjal M."/>
            <person name="Hansen N.F."/>
            <person name="Hayashizaki Y."/>
            <person name="Johnson-Hopson C."/>
            <person name="Hsuan V.W."/>
            <person name="Iida K."/>
            <person name="Karnes M."/>
            <person name="Khan S."/>
            <person name="Koesema E."/>
            <person name="Ishida J."/>
            <person name="Jiang P.X."/>
            <person name="Jones T."/>
            <person name="Kawai J."/>
            <person name="Kamiya A."/>
            <person name="Meyers C."/>
            <person name="Nakajima M."/>
            <person name="Narusaka M."/>
            <person name="Seki M."/>
            <person name="Sakurai T."/>
            <person name="Satou M."/>
            <person name="Tamse R."/>
            <person name="Vaysberg M."/>
            <person name="Wallender E.K."/>
            <person name="Wong C."/>
            <person name="Yamamura Y."/>
            <person name="Yuan S."/>
            <person name="Shinozaki K."/>
            <person name="Davis R.W."/>
            <person name="Theologis A."/>
            <person name="Ecker J.R."/>
        </authorList>
    </citation>
    <scope>NUCLEOTIDE SEQUENCE [LARGE SCALE MRNA] (ISOFORM 1)</scope>
    <source>
        <strain>cv. Columbia</strain>
    </source>
</reference>
<reference key="4">
    <citation type="journal article" date="2009" name="DNA Res.">
        <title>Analysis of multiple occurrences of alternative splicing events in Arabidopsis thaliana using novel sequenced full-length cDNAs.</title>
        <authorList>
            <person name="Iida K."/>
            <person name="Fukami-Kobayashi K."/>
            <person name="Toyoda A."/>
            <person name="Sakaki Y."/>
            <person name="Kobayashi M."/>
            <person name="Seki M."/>
            <person name="Shinozaki K."/>
        </authorList>
    </citation>
    <scope>NUCLEOTIDE SEQUENCE [LARGE SCALE MRNA] (ISOFORM 2)</scope>
    <source>
        <strain>cv. Columbia</strain>
    </source>
</reference>
<reference key="5">
    <citation type="journal article" date="2007" name="Plant Cell">
        <title>Proteome analysis of Arabidopsis leaf peroxisomes reveals novel targeting peptides, metabolic pathways, and defense mechanisms.</title>
        <authorList>
            <person name="Reumann S."/>
            <person name="Babujee L."/>
            <person name="Ma C."/>
            <person name="Wienkoop S."/>
            <person name="Siemsen T."/>
            <person name="Antonicelli G.E."/>
            <person name="Rasche N."/>
            <person name="Lueder F."/>
            <person name="Weckwerth W."/>
            <person name="Jahn O."/>
        </authorList>
    </citation>
    <scope>IDENTIFICATION BY MASS SPECTROMETRY</scope>
</reference>
<reference key="6">
    <citation type="journal article" date="2009" name="J. Exp. Bot.">
        <title>Inducible antisense suppression of glycolate oxidase reveals its strong regulation over photosynthesis in rice.</title>
        <authorList>
            <person name="Xu H.-W."/>
            <person name="Zhang J."/>
            <person name="Zeng J."/>
            <person name="Jiang L."/>
            <person name="Liu E."/>
            <person name="Peng C."/>
            <person name="He Z.-H."/>
            <person name="Peng X.-X."/>
        </authorList>
    </citation>
    <scope>GENE FAMILY</scope>
    <scope>NOMENCLATURE</scope>
</reference>
<reference key="7">
    <citation type="journal article" date="2015" name="J. Biol. Chem.">
        <title>Experimental evidence for a hydride transfer mechanism in plant glycolate oxidase catalysis.</title>
        <authorList>
            <person name="Dellero Y."/>
            <person name="Mauve C."/>
            <person name="Boex-Fontvieille E."/>
            <person name="Flesch V."/>
            <person name="Jossier M."/>
            <person name="Tcherkez G."/>
            <person name="Hodges M."/>
        </authorList>
    </citation>
    <scope>FUNCTION</scope>
    <scope>CATALYTIC ACTIVITY</scope>
    <scope>BIOPHYSICOCHEMICAL PROPERTIES</scope>
    <scope>REACTION MECHANISM</scope>
    <scope>ACTIVE SITE</scope>
    <scope>PATHWAY</scope>
</reference>
<keyword id="KW-0007">Acetylation</keyword>
<keyword id="KW-0025">Alternative splicing</keyword>
<keyword id="KW-0285">Flavoprotein</keyword>
<keyword id="KW-0288">FMN</keyword>
<keyword id="KW-0323">Glycolate pathway</keyword>
<keyword id="KW-0560">Oxidoreductase</keyword>
<keyword id="KW-0576">Peroxisome</keyword>
<keyword id="KW-0601">Photorespiration</keyword>
<keyword id="KW-1185">Reference proteome</keyword>
<dbReference type="EC" id="1.1.3.15" evidence="6"/>
<dbReference type="EMBL" id="AB028617">
    <property type="protein sequence ID" value="BAB01334.1"/>
    <property type="molecule type" value="Genomic_DNA"/>
</dbReference>
<dbReference type="EMBL" id="CP002686">
    <property type="protein sequence ID" value="AEE75518.1"/>
    <property type="molecule type" value="Genomic_DNA"/>
</dbReference>
<dbReference type="EMBL" id="CP002686">
    <property type="protein sequence ID" value="AEE75520.1"/>
    <property type="molecule type" value="Genomic_DNA"/>
</dbReference>
<dbReference type="EMBL" id="CP002686">
    <property type="protein sequence ID" value="AEE75521.1"/>
    <property type="molecule type" value="Genomic_DNA"/>
</dbReference>
<dbReference type="EMBL" id="AY053412">
    <property type="protein sequence ID" value="AAK96642.1"/>
    <property type="molecule type" value="mRNA"/>
</dbReference>
<dbReference type="EMBL" id="AF428396">
    <property type="protein sequence ID" value="AAL16164.1"/>
    <property type="molecule type" value="mRNA"/>
</dbReference>
<dbReference type="EMBL" id="AF428328">
    <property type="protein sequence ID" value="AAL16258.1"/>
    <property type="molecule type" value="mRNA"/>
</dbReference>
<dbReference type="EMBL" id="AY065122">
    <property type="protein sequence ID" value="AAL38298.1"/>
    <property type="status" value="ALT_INIT"/>
    <property type="molecule type" value="mRNA"/>
</dbReference>
<dbReference type="EMBL" id="AY074830">
    <property type="protein sequence ID" value="AAL69528.1"/>
    <property type="molecule type" value="mRNA"/>
</dbReference>
<dbReference type="EMBL" id="AY081566">
    <property type="protein sequence ID" value="AAM10128.1"/>
    <property type="molecule type" value="mRNA"/>
</dbReference>
<dbReference type="EMBL" id="AK317539">
    <property type="protein sequence ID" value="BAH20203.1"/>
    <property type="molecule type" value="mRNA"/>
</dbReference>
<dbReference type="RefSeq" id="NP_001030694.1">
    <molecule id="Q9LRR9-2"/>
    <property type="nucleotide sequence ID" value="NM_001035617.1"/>
</dbReference>
<dbReference type="RefSeq" id="NP_188060.1">
    <molecule id="Q9LRR9-1"/>
    <property type="nucleotide sequence ID" value="NM_112302.4"/>
</dbReference>
<dbReference type="RefSeq" id="NP_850584.1">
    <molecule id="Q9LRR9-1"/>
    <property type="nucleotide sequence ID" value="NM_180253.2"/>
</dbReference>
<dbReference type="SMR" id="Q9LRR9"/>
<dbReference type="BioGRID" id="5999">
    <property type="interactions" value="5"/>
</dbReference>
<dbReference type="FunCoup" id="Q9LRR9">
    <property type="interactions" value="1948"/>
</dbReference>
<dbReference type="IntAct" id="Q9LRR9">
    <property type="interactions" value="3"/>
</dbReference>
<dbReference type="MINT" id="Q9LRR9"/>
<dbReference type="STRING" id="3702.Q9LRR9"/>
<dbReference type="iPTMnet" id="Q9LRR9"/>
<dbReference type="PaxDb" id="3702-AT3G14420.1"/>
<dbReference type="EnsemblPlants" id="AT3G14420.1">
    <molecule id="Q9LRR9-1"/>
    <property type="protein sequence ID" value="AT3G14420.1"/>
    <property type="gene ID" value="AT3G14420"/>
</dbReference>
<dbReference type="EnsemblPlants" id="AT3G14420.2">
    <molecule id="Q9LRR9-1"/>
    <property type="protein sequence ID" value="AT3G14420.2"/>
    <property type="gene ID" value="AT3G14420"/>
</dbReference>
<dbReference type="EnsemblPlants" id="AT3G14420.4">
    <molecule id="Q9LRR9-2"/>
    <property type="protein sequence ID" value="AT3G14420.4"/>
    <property type="gene ID" value="AT3G14420"/>
</dbReference>
<dbReference type="Gramene" id="AT3G14420.1">
    <molecule id="Q9LRR9-1"/>
    <property type="protein sequence ID" value="AT3G14420.1"/>
    <property type="gene ID" value="AT3G14420"/>
</dbReference>
<dbReference type="Gramene" id="AT3G14420.2">
    <molecule id="Q9LRR9-1"/>
    <property type="protein sequence ID" value="AT3G14420.2"/>
    <property type="gene ID" value="AT3G14420"/>
</dbReference>
<dbReference type="Gramene" id="AT3G14420.4">
    <molecule id="Q9LRR9-2"/>
    <property type="protein sequence ID" value="AT3G14420.4"/>
    <property type="gene ID" value="AT3G14420"/>
</dbReference>
<dbReference type="KEGG" id="ath:AT3G14420"/>
<dbReference type="Araport" id="AT3G14420"/>
<dbReference type="TAIR" id="AT3G14420">
    <property type="gene designation" value="GOX1"/>
</dbReference>
<dbReference type="eggNOG" id="KOG0538">
    <property type="taxonomic scope" value="Eukaryota"/>
</dbReference>
<dbReference type="InParanoid" id="Q9LRR9"/>
<dbReference type="PhylomeDB" id="Q9LRR9"/>
<dbReference type="BioCyc" id="ARA:AT3G14420-MONOMER"/>
<dbReference type="BioCyc" id="MetaCyc:AT3G14420-MONOMER"/>
<dbReference type="BRENDA" id="1.1.3.15">
    <property type="organism ID" value="399"/>
</dbReference>
<dbReference type="UniPathway" id="UPA00951">
    <property type="reaction ID" value="UER00912"/>
</dbReference>
<dbReference type="CD-CODE" id="4299E36E">
    <property type="entry name" value="Nucleolus"/>
</dbReference>
<dbReference type="PRO" id="PR:Q9LRR9"/>
<dbReference type="Proteomes" id="UP000006548">
    <property type="component" value="Chromosome 3"/>
</dbReference>
<dbReference type="ExpressionAtlas" id="Q9LRR9">
    <property type="expression patterns" value="baseline and differential"/>
</dbReference>
<dbReference type="GO" id="GO:0048046">
    <property type="term" value="C:apoplast"/>
    <property type="evidence" value="ECO:0007005"/>
    <property type="project" value="TAIR"/>
</dbReference>
<dbReference type="GO" id="GO:0009507">
    <property type="term" value="C:chloroplast"/>
    <property type="evidence" value="ECO:0007005"/>
    <property type="project" value="TAIR"/>
</dbReference>
<dbReference type="GO" id="GO:0009570">
    <property type="term" value="C:chloroplast stroma"/>
    <property type="evidence" value="ECO:0007005"/>
    <property type="project" value="TAIR"/>
</dbReference>
<dbReference type="GO" id="GO:0005829">
    <property type="term" value="C:cytosol"/>
    <property type="evidence" value="ECO:0007005"/>
    <property type="project" value="TAIR"/>
</dbReference>
<dbReference type="GO" id="GO:0022626">
    <property type="term" value="C:cytosolic ribosome"/>
    <property type="evidence" value="ECO:0007005"/>
    <property type="project" value="TAIR"/>
</dbReference>
<dbReference type="GO" id="GO:0005634">
    <property type="term" value="C:nucleus"/>
    <property type="evidence" value="ECO:0007005"/>
    <property type="project" value="TAIR"/>
</dbReference>
<dbReference type="GO" id="GO:0005777">
    <property type="term" value="C:peroxisome"/>
    <property type="evidence" value="ECO:0007005"/>
    <property type="project" value="TAIR"/>
</dbReference>
<dbReference type="GO" id="GO:0009506">
    <property type="term" value="C:plasmodesma"/>
    <property type="evidence" value="ECO:0007005"/>
    <property type="project" value="TAIR"/>
</dbReference>
<dbReference type="GO" id="GO:0003973">
    <property type="term" value="F:(S)-2-hydroxy-acid oxidase activity"/>
    <property type="evidence" value="ECO:0007669"/>
    <property type="project" value="UniProtKB-EC"/>
</dbReference>
<dbReference type="GO" id="GO:0010181">
    <property type="term" value="F:FMN binding"/>
    <property type="evidence" value="ECO:0007669"/>
    <property type="project" value="InterPro"/>
</dbReference>
<dbReference type="GO" id="GO:0003729">
    <property type="term" value="F:mRNA binding"/>
    <property type="evidence" value="ECO:0000314"/>
    <property type="project" value="TAIR"/>
</dbReference>
<dbReference type="GO" id="GO:0042742">
    <property type="term" value="P:defense response to bacterium"/>
    <property type="evidence" value="ECO:0000315"/>
    <property type="project" value="TAIR"/>
</dbReference>
<dbReference type="GO" id="GO:0050665">
    <property type="term" value="P:hydrogen peroxide biosynthetic process"/>
    <property type="evidence" value="ECO:0000315"/>
    <property type="project" value="TAIR"/>
</dbReference>
<dbReference type="GO" id="GO:0009854">
    <property type="term" value="P:oxidative photosynthetic carbon pathway"/>
    <property type="evidence" value="ECO:0007669"/>
    <property type="project" value="UniProtKB-KW"/>
</dbReference>
<dbReference type="CDD" id="cd02809">
    <property type="entry name" value="alpha_hydroxyacid_oxid_FMN"/>
    <property type="match status" value="1"/>
</dbReference>
<dbReference type="FunFam" id="3.20.20.70:FF:000063">
    <property type="entry name" value="peroxisomal (S)-2-hydroxy-acid oxidase GLO1"/>
    <property type="match status" value="1"/>
</dbReference>
<dbReference type="Gene3D" id="3.20.20.70">
    <property type="entry name" value="Aldolase class I"/>
    <property type="match status" value="1"/>
</dbReference>
<dbReference type="InterPro" id="IPR013785">
    <property type="entry name" value="Aldolase_TIM"/>
</dbReference>
<dbReference type="InterPro" id="IPR012133">
    <property type="entry name" value="Alpha-hydoxy_acid_DH_FMN"/>
</dbReference>
<dbReference type="InterPro" id="IPR000262">
    <property type="entry name" value="FMN-dep_DH"/>
</dbReference>
<dbReference type="InterPro" id="IPR037396">
    <property type="entry name" value="FMN_HAD"/>
</dbReference>
<dbReference type="InterPro" id="IPR008259">
    <property type="entry name" value="FMN_hydac_DH_AS"/>
</dbReference>
<dbReference type="PANTHER" id="PTHR10578:SF107">
    <property type="entry name" value="2-HYDROXYACID OXIDASE 1"/>
    <property type="match status" value="1"/>
</dbReference>
<dbReference type="PANTHER" id="PTHR10578">
    <property type="entry name" value="S -2-HYDROXY-ACID OXIDASE-RELATED"/>
    <property type="match status" value="1"/>
</dbReference>
<dbReference type="Pfam" id="PF01070">
    <property type="entry name" value="FMN_dh"/>
    <property type="match status" value="1"/>
</dbReference>
<dbReference type="PIRSF" id="PIRSF000138">
    <property type="entry name" value="Al-hdrx_acd_dh"/>
    <property type="match status" value="1"/>
</dbReference>
<dbReference type="SUPFAM" id="SSF51395">
    <property type="entry name" value="FMN-linked oxidoreductases"/>
    <property type="match status" value="1"/>
</dbReference>
<dbReference type="PROSITE" id="PS00557">
    <property type="entry name" value="FMN_HYDROXY_ACID_DH_1"/>
    <property type="match status" value="1"/>
</dbReference>
<dbReference type="PROSITE" id="PS51349">
    <property type="entry name" value="FMN_HYDROXY_ACID_DH_2"/>
    <property type="match status" value="1"/>
</dbReference>
<evidence type="ECO:0000250" key="1"/>
<evidence type="ECO:0000250" key="2">
    <source>
        <dbReference type="UniProtKB" id="O49506"/>
    </source>
</evidence>
<evidence type="ECO:0000250" key="3">
    <source>
        <dbReference type="UniProtKB" id="P05414"/>
    </source>
</evidence>
<evidence type="ECO:0000250" key="4">
    <source>
        <dbReference type="UniProtKB" id="Q9UJM8"/>
    </source>
</evidence>
<evidence type="ECO:0000255" key="5">
    <source>
        <dbReference type="PROSITE-ProRule" id="PRU00683"/>
    </source>
</evidence>
<evidence type="ECO:0000269" key="6">
    <source>
    </source>
</evidence>
<evidence type="ECO:0000303" key="7">
    <source>
    </source>
</evidence>
<evidence type="ECO:0000303" key="8">
    <source>
    </source>
</evidence>
<evidence type="ECO:0000305" key="9"/>
<evidence type="ECO:0000305" key="10">
    <source>
    </source>
</evidence>
<feature type="chain" id="PRO_0000206324" description="Glycolate oxidase 1">
    <location>
        <begin position="1"/>
        <end position="367"/>
    </location>
</feature>
<feature type="active site" description="Proton acceptor" evidence="5 10">
    <location>
        <position position="254"/>
    </location>
</feature>
<feature type="binding site" evidence="4">
    <location>
        <position position="24"/>
    </location>
    <ligand>
        <name>glyoxylate</name>
        <dbReference type="ChEBI" id="CHEBI:36655"/>
    </ligand>
</feature>
<feature type="binding site" evidence="3">
    <location>
        <begin position="77"/>
        <end position="79"/>
    </location>
    <ligand>
        <name>FMN</name>
        <dbReference type="ChEBI" id="CHEBI:58210"/>
    </ligand>
</feature>
<feature type="binding site" evidence="3">
    <location>
        <position position="106"/>
    </location>
    <ligand>
        <name>FMN</name>
        <dbReference type="ChEBI" id="CHEBI:58210"/>
    </ligand>
</feature>
<feature type="binding site" evidence="3">
    <location>
        <begin position="127"/>
        <end position="129"/>
    </location>
    <ligand>
        <name>FMN</name>
        <dbReference type="ChEBI" id="CHEBI:58210"/>
    </ligand>
</feature>
<feature type="binding site" evidence="4">
    <location>
        <position position="129"/>
    </location>
    <ligand>
        <name>glyoxylate</name>
        <dbReference type="ChEBI" id="CHEBI:36655"/>
    </ligand>
</feature>
<feature type="binding site" evidence="3">
    <location>
        <position position="155"/>
    </location>
    <ligand>
        <name>FMN</name>
        <dbReference type="ChEBI" id="CHEBI:58210"/>
    </ligand>
</feature>
<feature type="binding site" evidence="4">
    <location>
        <position position="164"/>
    </location>
    <ligand>
        <name>glyoxylate</name>
        <dbReference type="ChEBI" id="CHEBI:36655"/>
    </ligand>
</feature>
<feature type="binding site" evidence="3">
    <location>
        <position position="230"/>
    </location>
    <ligand>
        <name>FMN</name>
        <dbReference type="ChEBI" id="CHEBI:58210"/>
    </ligand>
</feature>
<feature type="binding site" evidence="3">
    <location>
        <position position="252"/>
    </location>
    <ligand>
        <name>FMN</name>
        <dbReference type="ChEBI" id="CHEBI:58210"/>
    </ligand>
</feature>
<feature type="binding site" evidence="4">
    <location>
        <position position="254"/>
    </location>
    <ligand>
        <name>glyoxylate</name>
        <dbReference type="ChEBI" id="CHEBI:36655"/>
    </ligand>
</feature>
<feature type="binding site" evidence="4">
    <location>
        <position position="257"/>
    </location>
    <ligand>
        <name>glyoxylate</name>
        <dbReference type="ChEBI" id="CHEBI:36655"/>
    </ligand>
</feature>
<feature type="binding site" evidence="3">
    <location>
        <begin position="285"/>
        <end position="289"/>
    </location>
    <ligand>
        <name>FMN</name>
        <dbReference type="ChEBI" id="CHEBI:58210"/>
    </ligand>
</feature>
<feature type="binding site" evidence="3">
    <location>
        <begin position="308"/>
        <end position="309"/>
    </location>
    <ligand>
        <name>FMN</name>
        <dbReference type="ChEBI" id="CHEBI:58210"/>
    </ligand>
</feature>
<feature type="site" description="Involved in determining the substrate specificity of glycolate oxidase" evidence="3">
    <location>
        <position position="108"/>
    </location>
</feature>
<feature type="modified residue" description="N-acetylmethionine" evidence="2">
    <location>
        <position position="1"/>
    </location>
</feature>
<feature type="splice variant" id="VSP_040387" description="In isoform 2." evidence="7">
    <location>
        <begin position="1"/>
        <end position="19"/>
    </location>
</feature>
<feature type="sequence conflict" description="In Ref. 3; AAL16258." evidence="9" ref="3">
    <original>V</original>
    <variation>A</variation>
    <location>
        <position position="55"/>
    </location>
</feature>
<feature type="sequence conflict" description="In Ref. 3; AAL38298/AAM10128." evidence="9" ref="3">
    <original>P</original>
    <variation>L</variation>
    <location>
        <position position="363"/>
    </location>
</feature>